<organism>
    <name type="scientific">Arabidopsis thaliana</name>
    <name type="common">Mouse-ear cress</name>
    <dbReference type="NCBI Taxonomy" id="3702"/>
    <lineage>
        <taxon>Eukaryota</taxon>
        <taxon>Viridiplantae</taxon>
        <taxon>Streptophyta</taxon>
        <taxon>Embryophyta</taxon>
        <taxon>Tracheophyta</taxon>
        <taxon>Spermatophyta</taxon>
        <taxon>Magnoliopsida</taxon>
        <taxon>eudicotyledons</taxon>
        <taxon>Gunneridae</taxon>
        <taxon>Pentapetalae</taxon>
        <taxon>rosids</taxon>
        <taxon>malvids</taxon>
        <taxon>Brassicales</taxon>
        <taxon>Brassicaceae</taxon>
        <taxon>Camelineae</taxon>
        <taxon>Arabidopsis</taxon>
    </lineage>
</organism>
<feature type="chain" id="PRO_0000420935" description="Chloroplastic import inner membrane translocase subunit TIM22-2">
    <location>
        <begin position="1"/>
        <end position="210"/>
    </location>
</feature>
<feature type="transmembrane region" description="Helical" evidence="1">
    <location>
        <begin position="37"/>
        <end position="53"/>
    </location>
</feature>
<feature type="transmembrane region" description="Helical" evidence="1">
    <location>
        <begin position="88"/>
        <end position="105"/>
    </location>
</feature>
<feature type="transmembrane region" description="Helical" evidence="1">
    <location>
        <begin position="114"/>
        <end position="130"/>
    </location>
</feature>
<feature type="transmembrane region" description="Helical" evidence="1">
    <location>
        <begin position="137"/>
        <end position="154"/>
    </location>
</feature>
<feature type="region of interest" description="Disordered" evidence="2">
    <location>
        <begin position="1"/>
        <end position="34"/>
    </location>
</feature>
<sequence length="210" mass="21811">MAANDSSNAIDIDGNLDSDSNLNTDGDEATDNDSSKALVTIPAPAVCLFRFAGDAAGGAVMGSIFGYGSGLFKKKGFKGSFADAGQSAKTFAVLSGVHSLVVCLLKQIRGKDDAINVGVAGCCTGLALSFPGAPQALLQSCLTFGAFSFILEGLNKRQTALAHSVSLRHQTGLFQDHHRALPLSLALPIPEEIKGAFSSFCKSLAKPRKF</sequence>
<evidence type="ECO:0000255" key="1"/>
<evidence type="ECO:0000256" key="2">
    <source>
        <dbReference type="SAM" id="MobiDB-lite"/>
    </source>
</evidence>
<evidence type="ECO:0000269" key="3">
    <source>
    </source>
</evidence>
<evidence type="ECO:0000269" key="4">
    <source>
    </source>
</evidence>
<evidence type="ECO:0000269" key="5">
    <source>
    </source>
</evidence>
<evidence type="ECO:0000303" key="6">
    <source>
    </source>
</evidence>
<evidence type="ECO:0000305" key="7"/>
<reference key="1">
    <citation type="journal article" date="2007" name="Plant Physiol.">
        <title>Characterization of the preprotein and amino acid transporter gene family in Arabidopsis.</title>
        <authorList>
            <person name="Murcha M.W."/>
            <person name="Elhafez D."/>
            <person name="Lister R."/>
            <person name="Tonti-Filippini J."/>
            <person name="Baumgartner M."/>
            <person name="Philippar K."/>
            <person name="Carrie C."/>
            <person name="Mokranjac D."/>
            <person name="Soll J."/>
            <person name="Whelan J."/>
        </authorList>
    </citation>
    <scope>NUCLEOTIDE SEQUENCE [MRNA]</scope>
</reference>
<reference key="2">
    <citation type="journal article" date="1999" name="Nature">
        <title>Sequence and analysis of chromosome 4 of the plant Arabidopsis thaliana.</title>
        <authorList>
            <person name="Mayer K.F.X."/>
            <person name="Schueller C."/>
            <person name="Wambutt R."/>
            <person name="Murphy G."/>
            <person name="Volckaert G."/>
            <person name="Pohl T."/>
            <person name="Duesterhoeft A."/>
            <person name="Stiekema W."/>
            <person name="Entian K.-D."/>
            <person name="Terryn N."/>
            <person name="Harris B."/>
            <person name="Ansorge W."/>
            <person name="Brandt P."/>
            <person name="Grivell L.A."/>
            <person name="Rieger M."/>
            <person name="Weichselgartner M."/>
            <person name="de Simone V."/>
            <person name="Obermaier B."/>
            <person name="Mache R."/>
            <person name="Mueller M."/>
            <person name="Kreis M."/>
            <person name="Delseny M."/>
            <person name="Puigdomenech P."/>
            <person name="Watson M."/>
            <person name="Schmidtheini T."/>
            <person name="Reichert B."/>
            <person name="Portetelle D."/>
            <person name="Perez-Alonso M."/>
            <person name="Boutry M."/>
            <person name="Bancroft I."/>
            <person name="Vos P."/>
            <person name="Hoheisel J."/>
            <person name="Zimmermann W."/>
            <person name="Wedler H."/>
            <person name="Ridley P."/>
            <person name="Langham S.-A."/>
            <person name="McCullagh B."/>
            <person name="Bilham L."/>
            <person name="Robben J."/>
            <person name="van der Schueren J."/>
            <person name="Grymonprez B."/>
            <person name="Chuang Y.-J."/>
            <person name="Vandenbussche F."/>
            <person name="Braeken M."/>
            <person name="Weltjens I."/>
            <person name="Voet M."/>
            <person name="Bastiaens I."/>
            <person name="Aert R."/>
            <person name="Defoor E."/>
            <person name="Weitzenegger T."/>
            <person name="Bothe G."/>
            <person name="Ramsperger U."/>
            <person name="Hilbert H."/>
            <person name="Braun M."/>
            <person name="Holzer E."/>
            <person name="Brandt A."/>
            <person name="Peters S."/>
            <person name="van Staveren M."/>
            <person name="Dirkse W."/>
            <person name="Mooijman P."/>
            <person name="Klein Lankhorst R."/>
            <person name="Rose M."/>
            <person name="Hauf J."/>
            <person name="Koetter P."/>
            <person name="Berneiser S."/>
            <person name="Hempel S."/>
            <person name="Feldpausch M."/>
            <person name="Lamberth S."/>
            <person name="Van den Daele H."/>
            <person name="De Keyser A."/>
            <person name="Buysshaert C."/>
            <person name="Gielen J."/>
            <person name="Villarroel R."/>
            <person name="De Clercq R."/>
            <person name="van Montagu M."/>
            <person name="Rogers J."/>
            <person name="Cronin A."/>
            <person name="Quail M.A."/>
            <person name="Bray-Allen S."/>
            <person name="Clark L."/>
            <person name="Doggett J."/>
            <person name="Hall S."/>
            <person name="Kay M."/>
            <person name="Lennard N."/>
            <person name="McLay K."/>
            <person name="Mayes R."/>
            <person name="Pettett A."/>
            <person name="Rajandream M.A."/>
            <person name="Lyne M."/>
            <person name="Benes V."/>
            <person name="Rechmann S."/>
            <person name="Borkova D."/>
            <person name="Bloecker H."/>
            <person name="Scharfe M."/>
            <person name="Grimm M."/>
            <person name="Loehnert T.-H."/>
            <person name="Dose S."/>
            <person name="de Haan M."/>
            <person name="Maarse A.C."/>
            <person name="Schaefer M."/>
            <person name="Mueller-Auer S."/>
            <person name="Gabel C."/>
            <person name="Fuchs M."/>
            <person name="Fartmann B."/>
            <person name="Granderath K."/>
            <person name="Dauner D."/>
            <person name="Herzl A."/>
            <person name="Neumann S."/>
            <person name="Argiriou A."/>
            <person name="Vitale D."/>
            <person name="Liguori R."/>
            <person name="Piravandi E."/>
            <person name="Massenet O."/>
            <person name="Quigley F."/>
            <person name="Clabauld G."/>
            <person name="Muendlein A."/>
            <person name="Felber R."/>
            <person name="Schnabl S."/>
            <person name="Hiller R."/>
            <person name="Schmidt W."/>
            <person name="Lecharny A."/>
            <person name="Aubourg S."/>
            <person name="Chefdor F."/>
            <person name="Cooke R."/>
            <person name="Berger C."/>
            <person name="Monfort A."/>
            <person name="Casacuberta E."/>
            <person name="Gibbons T."/>
            <person name="Weber N."/>
            <person name="Vandenbol M."/>
            <person name="Bargues M."/>
            <person name="Terol J."/>
            <person name="Torres A."/>
            <person name="Perez-Perez A."/>
            <person name="Purnelle B."/>
            <person name="Bent E."/>
            <person name="Johnson S."/>
            <person name="Tacon D."/>
            <person name="Jesse T."/>
            <person name="Heijnen L."/>
            <person name="Schwarz S."/>
            <person name="Scholler P."/>
            <person name="Heber S."/>
            <person name="Francs P."/>
            <person name="Bielke C."/>
            <person name="Frishman D."/>
            <person name="Haase D."/>
            <person name="Lemcke K."/>
            <person name="Mewes H.-W."/>
            <person name="Stocker S."/>
            <person name="Zaccaria P."/>
            <person name="Bevan M."/>
            <person name="Wilson R.K."/>
            <person name="de la Bastide M."/>
            <person name="Habermann K."/>
            <person name="Parnell L."/>
            <person name="Dedhia N."/>
            <person name="Gnoj L."/>
            <person name="Schutz K."/>
            <person name="Huang E."/>
            <person name="Spiegel L."/>
            <person name="Sekhon M."/>
            <person name="Murray J."/>
            <person name="Sheet P."/>
            <person name="Cordes M."/>
            <person name="Abu-Threideh J."/>
            <person name="Stoneking T."/>
            <person name="Kalicki J."/>
            <person name="Graves T."/>
            <person name="Harmon G."/>
            <person name="Edwards J."/>
            <person name="Latreille P."/>
            <person name="Courtney L."/>
            <person name="Cloud J."/>
            <person name="Abbott A."/>
            <person name="Scott K."/>
            <person name="Johnson D."/>
            <person name="Minx P."/>
            <person name="Bentley D."/>
            <person name="Fulton B."/>
            <person name="Miller N."/>
            <person name="Greco T."/>
            <person name="Kemp K."/>
            <person name="Kramer J."/>
            <person name="Fulton L."/>
            <person name="Mardis E."/>
            <person name="Dante M."/>
            <person name="Pepin K."/>
            <person name="Hillier L.W."/>
            <person name="Nelson J."/>
            <person name="Spieth J."/>
            <person name="Ryan E."/>
            <person name="Andrews S."/>
            <person name="Geisel C."/>
            <person name="Layman D."/>
            <person name="Du H."/>
            <person name="Ali J."/>
            <person name="Berghoff A."/>
            <person name="Jones K."/>
            <person name="Drone K."/>
            <person name="Cotton M."/>
            <person name="Joshu C."/>
            <person name="Antonoiu B."/>
            <person name="Zidanic M."/>
            <person name="Strong C."/>
            <person name="Sun H."/>
            <person name="Lamar B."/>
            <person name="Yordan C."/>
            <person name="Ma P."/>
            <person name="Zhong J."/>
            <person name="Preston R."/>
            <person name="Vil D."/>
            <person name="Shekher M."/>
            <person name="Matero A."/>
            <person name="Shah R."/>
            <person name="Swaby I.K."/>
            <person name="O'Shaughnessy A."/>
            <person name="Rodriguez M."/>
            <person name="Hoffman J."/>
            <person name="Till S."/>
            <person name="Granat S."/>
            <person name="Shohdy N."/>
            <person name="Hasegawa A."/>
            <person name="Hameed A."/>
            <person name="Lodhi M."/>
            <person name="Johnson A."/>
            <person name="Chen E."/>
            <person name="Marra M.A."/>
            <person name="Martienssen R."/>
            <person name="McCombie W.R."/>
        </authorList>
    </citation>
    <scope>NUCLEOTIDE SEQUENCE [LARGE SCALE GENOMIC DNA]</scope>
    <source>
        <strain>cv. Columbia</strain>
    </source>
</reference>
<reference key="3">
    <citation type="journal article" date="2017" name="Plant J.">
        <title>Araport11: a complete reannotation of the Arabidopsis thaliana reference genome.</title>
        <authorList>
            <person name="Cheng C.Y."/>
            <person name="Krishnakumar V."/>
            <person name="Chan A.P."/>
            <person name="Thibaud-Nissen F."/>
            <person name="Schobel S."/>
            <person name="Town C.D."/>
        </authorList>
    </citation>
    <scope>GENOME REANNOTATION</scope>
    <source>
        <strain>cv. Columbia</strain>
    </source>
</reference>
<reference key="4">
    <citation type="journal article" date="2003" name="Science">
        <title>Empirical analysis of transcriptional activity in the Arabidopsis genome.</title>
        <authorList>
            <person name="Yamada K."/>
            <person name="Lim J."/>
            <person name="Dale J.M."/>
            <person name="Chen H."/>
            <person name="Shinn P."/>
            <person name="Palm C.J."/>
            <person name="Southwick A.M."/>
            <person name="Wu H.C."/>
            <person name="Kim C.J."/>
            <person name="Nguyen M."/>
            <person name="Pham P.K."/>
            <person name="Cheuk R.F."/>
            <person name="Karlin-Newmann G."/>
            <person name="Liu S.X."/>
            <person name="Lam B."/>
            <person name="Sakano H."/>
            <person name="Wu T."/>
            <person name="Yu G."/>
            <person name="Miranda M."/>
            <person name="Quach H.L."/>
            <person name="Tripp M."/>
            <person name="Chang C.H."/>
            <person name="Lee J.M."/>
            <person name="Toriumi M.J."/>
            <person name="Chan M.M."/>
            <person name="Tang C.C."/>
            <person name="Onodera C.S."/>
            <person name="Deng J.M."/>
            <person name="Akiyama K."/>
            <person name="Ansari Y."/>
            <person name="Arakawa T."/>
            <person name="Banh J."/>
            <person name="Banno F."/>
            <person name="Bowser L."/>
            <person name="Brooks S.Y."/>
            <person name="Carninci P."/>
            <person name="Chao Q."/>
            <person name="Choy N."/>
            <person name="Enju A."/>
            <person name="Goldsmith A.D."/>
            <person name="Gurjal M."/>
            <person name="Hansen N.F."/>
            <person name="Hayashizaki Y."/>
            <person name="Johnson-Hopson C."/>
            <person name="Hsuan V.W."/>
            <person name="Iida K."/>
            <person name="Karnes M."/>
            <person name="Khan S."/>
            <person name="Koesema E."/>
            <person name="Ishida J."/>
            <person name="Jiang P.X."/>
            <person name="Jones T."/>
            <person name="Kawai J."/>
            <person name="Kamiya A."/>
            <person name="Meyers C."/>
            <person name="Nakajima M."/>
            <person name="Narusaka M."/>
            <person name="Seki M."/>
            <person name="Sakurai T."/>
            <person name="Satou M."/>
            <person name="Tamse R."/>
            <person name="Vaysberg M."/>
            <person name="Wallender E.K."/>
            <person name="Wong C."/>
            <person name="Yamamura Y."/>
            <person name="Yuan S."/>
            <person name="Shinozaki K."/>
            <person name="Davis R.W."/>
            <person name="Theologis A."/>
            <person name="Ecker J.R."/>
        </authorList>
    </citation>
    <scope>NUCLEOTIDE SEQUENCE [LARGE SCALE MRNA]</scope>
    <source>
        <strain>cv. Columbia</strain>
    </source>
</reference>
<reference key="5">
    <citation type="submission" date="2002-03" db="EMBL/GenBank/DDBJ databases">
        <title>Full-length cDNA from Arabidopsis thaliana.</title>
        <authorList>
            <person name="Brover V.V."/>
            <person name="Troukhan M.E."/>
            <person name="Alexandrov N.A."/>
            <person name="Lu Y.-P."/>
            <person name="Flavell R.B."/>
            <person name="Feldmann K.A."/>
        </authorList>
    </citation>
    <scope>NUCLEOTIDE SEQUENCE [LARGE SCALE MRNA]</scope>
</reference>
<reference key="6">
    <citation type="journal article" date="2003" name="Plant Physiol.">
        <title>Identification, expression, and import of components 17 and 23 of the inner mitochondrial membrane translocase from Arabidopsis.</title>
        <authorList>
            <person name="Murcha M.W."/>
            <person name="Lister R."/>
            <person name="Ho A.Y."/>
            <person name="Whelan J."/>
        </authorList>
    </citation>
    <scope>TISSUE SPECIFICITY</scope>
    <scope>DEVELOPMENTAL STAGE</scope>
</reference>
<reference key="7">
    <citation type="journal article" date="2004" name="Plant Physiol.">
        <title>A transcriptomic and proteomic characterization of the Arabidopsis mitochondrial protein import apparatus and its response to mitochondrial dysfunction.</title>
        <authorList>
            <person name="Lister R."/>
            <person name="Chew O."/>
            <person name="Lee M.N."/>
            <person name="Heazlewood J.L."/>
            <person name="Clifton R."/>
            <person name="Parker K.L."/>
            <person name="Millar A.H."/>
            <person name="Whelan J."/>
        </authorList>
    </citation>
    <scope>TISSUE SPECIFICITY</scope>
</reference>
<reference key="8">
    <citation type="journal article" date="2009" name="Plant Physiol.">
        <title>Large-scale Arabidopsis phosphoproteome profiling reveals novel chloroplast kinase substrates and phosphorylation networks.</title>
        <authorList>
            <person name="Reiland S."/>
            <person name="Messerli G."/>
            <person name="Baerenfaller K."/>
            <person name="Gerrits B."/>
            <person name="Endler A."/>
            <person name="Grossmann J."/>
            <person name="Gruissem W."/>
            <person name="Baginsky S."/>
        </authorList>
    </citation>
    <scope>IDENTIFICATION BY MASS SPECTROMETRY [LARGE SCALE ANALYSIS]</scope>
</reference>
<reference key="9">
    <citation type="journal article" date="2013" name="Proc. Natl. Acad. Sci. U.S.A.">
        <title>Three proteins mediate import of transit sequence-less precursors into the inner envelope of chloroplasts in Arabidopsis thaliana.</title>
        <authorList>
            <person name="Rossig C."/>
            <person name="Reinbothe C."/>
            <person name="Gray J."/>
            <person name="Valdes O."/>
            <person name="von Wettstein D."/>
            <person name="Reinbothe S."/>
        </authorList>
    </citation>
    <scope>FUNCTION</scope>
    <scope>DISRUPTION PHENOTYPE</scope>
    <scope>SUBCELLULAR LOCATION</scope>
    <scope>SUBUNIT</scope>
    <scope>INTERACTION WITH CEQORH</scope>
    <source>
        <strain>cv. Columbia</strain>
    </source>
</reference>
<comment type="function">
    <text evidence="5">Together with HP30-1 and HP30-2, triggers the import and insertion of transit sequence-less multi-pass transmembrane proteins (e.g. CEQORH) into the chloroplastic inner membrane.</text>
</comment>
<comment type="subunit">
    <text evidence="5">Homodimer. Probable component of a protein-conducting channel made of HP30-1, HP30-2 and HP20 that mediates the import of transit sequence-less proteins into the chloroplastic inner membrane. Interacts with CEQORH.</text>
</comment>
<comment type="subcellular location">
    <subcellularLocation>
        <location evidence="5">Plastid</location>
        <location evidence="5">Chloroplast outer membrane</location>
        <topology evidence="1">Multi-pass membrane protein</topology>
    </subcellularLocation>
</comment>
<comment type="tissue specificity">
    <text evidence="3 4">Expressed in young cotyledons, roots, leaves and flowers.</text>
</comment>
<comment type="developmental stage">
    <text evidence="3">Peak of expression during cotyledon development.</text>
</comment>
<comment type="disruption phenotype">
    <text evidence="5">Impaired import of CEQORH in chloroplast inner membranes.</text>
</comment>
<comment type="similarity">
    <text evidence="7">Belongs to the Tim17/Tim22/Tim23 family.</text>
</comment>
<comment type="sequence caution" evidence="7">
    <conflict type="erroneous gene model prediction">
        <sequence resource="EMBL-CDS" id="CAB36513"/>
    </conflict>
</comment>
<comment type="sequence caution" evidence="7">
    <conflict type="erroneous gene model prediction">
        <sequence resource="EMBL-CDS" id="CAB79522"/>
    </conflict>
</comment>
<dbReference type="EMBL" id="AF410323">
    <property type="protein sequence ID" value="AAK95309.1"/>
    <property type="molecule type" value="mRNA"/>
</dbReference>
<dbReference type="EMBL" id="AL035440">
    <property type="protein sequence ID" value="CAB36513.1"/>
    <property type="status" value="ALT_SEQ"/>
    <property type="molecule type" value="Genomic_DNA"/>
</dbReference>
<dbReference type="EMBL" id="AL161565">
    <property type="protein sequence ID" value="CAB79522.1"/>
    <property type="status" value="ALT_SEQ"/>
    <property type="molecule type" value="Genomic_DNA"/>
</dbReference>
<dbReference type="EMBL" id="CP002687">
    <property type="protein sequence ID" value="AEE85235.1"/>
    <property type="molecule type" value="Genomic_DNA"/>
</dbReference>
<dbReference type="EMBL" id="AY102132">
    <property type="protein sequence ID" value="AAM26699.1"/>
    <property type="molecule type" value="mRNA"/>
</dbReference>
<dbReference type="EMBL" id="AY088301">
    <property type="protein sequence ID" value="AAM65840.1"/>
    <property type="molecule type" value="mRNA"/>
</dbReference>
<dbReference type="EMBL" id="DQ405270">
    <property type="protein sequence ID" value="ABD64059.1"/>
    <property type="molecule type" value="mRNA"/>
</dbReference>
<dbReference type="PIR" id="T04790">
    <property type="entry name" value="T04790"/>
</dbReference>
<dbReference type="RefSeq" id="NP_567754.1">
    <property type="nucleotide sequence ID" value="NM_118801.4"/>
</dbReference>
<dbReference type="SMR" id="Q94EH2"/>
<dbReference type="FunCoup" id="Q94EH2">
    <property type="interactions" value="274"/>
</dbReference>
<dbReference type="STRING" id="3702.Q94EH2"/>
<dbReference type="TCDB" id="3.A.8.1.4">
    <property type="family name" value="the mitochondrial protein translocase (mpt) family"/>
</dbReference>
<dbReference type="iPTMnet" id="Q94EH2"/>
<dbReference type="PaxDb" id="3702-AT4G26670.1"/>
<dbReference type="ProteomicsDB" id="234297"/>
<dbReference type="DNASU" id="828774"/>
<dbReference type="EnsemblPlants" id="AT4G26670.1">
    <property type="protein sequence ID" value="AT4G26670.1"/>
    <property type="gene ID" value="AT4G26670"/>
</dbReference>
<dbReference type="GeneID" id="828774"/>
<dbReference type="Gramene" id="AT4G26670.1">
    <property type="protein sequence ID" value="AT4G26670.1"/>
    <property type="gene ID" value="AT4G26670"/>
</dbReference>
<dbReference type="KEGG" id="ath:AT4G26670"/>
<dbReference type="Araport" id="AT4G26670"/>
<dbReference type="TAIR" id="AT4G26670">
    <property type="gene designation" value="HP20"/>
</dbReference>
<dbReference type="eggNOG" id="KOG1652">
    <property type="taxonomic scope" value="Eukaryota"/>
</dbReference>
<dbReference type="HOGENOM" id="CLU_083527_0_0_1"/>
<dbReference type="InParanoid" id="Q94EH2"/>
<dbReference type="OMA" id="PAVCLFR"/>
<dbReference type="OrthoDB" id="1913277at2759"/>
<dbReference type="PhylomeDB" id="Q94EH2"/>
<dbReference type="PRO" id="PR:Q94EH2"/>
<dbReference type="Proteomes" id="UP000006548">
    <property type="component" value="Chromosome 4"/>
</dbReference>
<dbReference type="ExpressionAtlas" id="Q94EH2">
    <property type="expression patterns" value="baseline and differential"/>
</dbReference>
<dbReference type="GO" id="GO:0009507">
    <property type="term" value="C:chloroplast"/>
    <property type="evidence" value="ECO:0000314"/>
    <property type="project" value="TAIR"/>
</dbReference>
<dbReference type="GO" id="GO:0009941">
    <property type="term" value="C:chloroplast envelope"/>
    <property type="evidence" value="ECO:0007005"/>
    <property type="project" value="TAIR"/>
</dbReference>
<dbReference type="GO" id="GO:0009707">
    <property type="term" value="C:chloroplast outer membrane"/>
    <property type="evidence" value="ECO:0000314"/>
    <property type="project" value="UniProtKB"/>
</dbReference>
<dbReference type="GO" id="GO:0005739">
    <property type="term" value="C:mitochondrion"/>
    <property type="evidence" value="ECO:0007669"/>
    <property type="project" value="GOC"/>
</dbReference>
<dbReference type="GO" id="GO:0042803">
    <property type="term" value="F:protein homodimerization activity"/>
    <property type="evidence" value="ECO:0000314"/>
    <property type="project" value="UniProtKB"/>
</dbReference>
<dbReference type="GO" id="GO:0045039">
    <property type="term" value="P:protein insertion into mitochondrial inner membrane"/>
    <property type="evidence" value="ECO:0007669"/>
    <property type="project" value="InterPro"/>
</dbReference>
<dbReference type="GO" id="GO:0045036">
    <property type="term" value="P:protein targeting to chloroplast"/>
    <property type="evidence" value="ECO:0000315"/>
    <property type="project" value="UniProtKB"/>
</dbReference>
<dbReference type="InterPro" id="IPR039175">
    <property type="entry name" value="TIM22"/>
</dbReference>
<dbReference type="PANTHER" id="PTHR14110:SF1">
    <property type="entry name" value="CHLOROPLASTIC IMPORT INNER MEMBRANE TRANSLOCASE SUBUNIT TIM22-2-RELATED"/>
    <property type="match status" value="1"/>
</dbReference>
<dbReference type="PANTHER" id="PTHR14110">
    <property type="entry name" value="MITOCHONDRIAL IMPORT INNER MEMBRANE TRANSLOCASE SUBUNIT TIM22"/>
    <property type="match status" value="1"/>
</dbReference>
<dbReference type="Pfam" id="PF02466">
    <property type="entry name" value="Tim17"/>
    <property type="match status" value="1"/>
</dbReference>
<accession>Q94EH2</accession>
<accession>Q9SZ09</accession>
<protein>
    <recommendedName>
        <fullName>Chloroplastic import inner membrane translocase subunit TIM22-2</fullName>
    </recommendedName>
    <alternativeName>
        <fullName evidence="6">Hypothetical outer plastid envelope protein of 20 kDa</fullName>
        <shortName evidence="6">Hypothetical protein 20</shortName>
    </alternativeName>
</protein>
<gene>
    <name type="primary">TIM22-2</name>
    <name evidence="6" type="synonym">HP20</name>
    <name type="ordered locus">At4g26670</name>
    <name type="ORF">F10M23.10</name>
</gene>
<name>TI222_ARATH</name>
<keyword id="KW-0150">Chloroplast</keyword>
<keyword id="KW-0472">Membrane</keyword>
<keyword id="KW-0934">Plastid</keyword>
<keyword id="KW-1002">Plastid outer membrane</keyword>
<keyword id="KW-0653">Protein transport</keyword>
<keyword id="KW-1185">Reference proteome</keyword>
<keyword id="KW-0812">Transmembrane</keyword>
<keyword id="KW-1133">Transmembrane helix</keyword>
<keyword id="KW-0813">Transport</keyword>
<proteinExistence type="evidence at protein level"/>